<keyword id="KW-0963">Cytoplasm</keyword>
<keyword id="KW-0255">Endonuclease</keyword>
<keyword id="KW-0378">Hydrolase</keyword>
<keyword id="KW-0479">Metal-binding</keyword>
<keyword id="KW-0540">Nuclease</keyword>
<keyword id="KW-1185">Reference proteome</keyword>
<keyword id="KW-0690">Ribosome biogenesis</keyword>
<keyword id="KW-0698">rRNA processing</keyword>
<keyword id="KW-0862">Zinc</keyword>
<dbReference type="EC" id="3.1.-.-" evidence="1"/>
<dbReference type="EMBL" id="BX294140">
    <property type="protein sequence ID" value="CAD73868.1"/>
    <property type="molecule type" value="Genomic_DNA"/>
</dbReference>
<dbReference type="RefSeq" id="NP_866182.1">
    <property type="nucleotide sequence ID" value="NC_005027.1"/>
</dbReference>
<dbReference type="SMR" id="Q7USC9"/>
<dbReference type="FunCoup" id="Q7USC9">
    <property type="interactions" value="208"/>
</dbReference>
<dbReference type="STRING" id="243090.RB4579"/>
<dbReference type="EnsemblBacteria" id="CAD73868">
    <property type="protein sequence ID" value="CAD73868"/>
    <property type="gene ID" value="RB4579"/>
</dbReference>
<dbReference type="KEGG" id="rba:RB4579"/>
<dbReference type="PATRIC" id="fig|243090.15.peg.2143"/>
<dbReference type="eggNOG" id="COG0319">
    <property type="taxonomic scope" value="Bacteria"/>
</dbReference>
<dbReference type="HOGENOM" id="CLU_1401493_0_0_0"/>
<dbReference type="InParanoid" id="Q7USC9"/>
<dbReference type="OrthoDB" id="9807740at2"/>
<dbReference type="Proteomes" id="UP000001025">
    <property type="component" value="Chromosome"/>
</dbReference>
<dbReference type="GO" id="GO:0005737">
    <property type="term" value="C:cytoplasm"/>
    <property type="evidence" value="ECO:0007669"/>
    <property type="project" value="UniProtKB-SubCell"/>
</dbReference>
<dbReference type="GO" id="GO:0004222">
    <property type="term" value="F:metalloendopeptidase activity"/>
    <property type="evidence" value="ECO:0007669"/>
    <property type="project" value="InterPro"/>
</dbReference>
<dbReference type="GO" id="GO:0004521">
    <property type="term" value="F:RNA endonuclease activity"/>
    <property type="evidence" value="ECO:0007669"/>
    <property type="project" value="UniProtKB-UniRule"/>
</dbReference>
<dbReference type="GO" id="GO:0008270">
    <property type="term" value="F:zinc ion binding"/>
    <property type="evidence" value="ECO:0007669"/>
    <property type="project" value="UniProtKB-UniRule"/>
</dbReference>
<dbReference type="GO" id="GO:0006364">
    <property type="term" value="P:rRNA processing"/>
    <property type="evidence" value="ECO:0007669"/>
    <property type="project" value="UniProtKB-UniRule"/>
</dbReference>
<dbReference type="Gene3D" id="3.40.390.30">
    <property type="entry name" value="Metalloproteases ('zincins'), catalytic domain"/>
    <property type="match status" value="1"/>
</dbReference>
<dbReference type="HAMAP" id="MF_00009">
    <property type="entry name" value="Endoribonucl_YbeY"/>
    <property type="match status" value="1"/>
</dbReference>
<dbReference type="InterPro" id="IPR023091">
    <property type="entry name" value="MetalPrtase_cat_dom_sf_prd"/>
</dbReference>
<dbReference type="InterPro" id="IPR002036">
    <property type="entry name" value="YbeY"/>
</dbReference>
<dbReference type="InterPro" id="IPR020549">
    <property type="entry name" value="YbeY_CS"/>
</dbReference>
<dbReference type="NCBIfam" id="TIGR00043">
    <property type="entry name" value="rRNA maturation RNase YbeY"/>
    <property type="match status" value="1"/>
</dbReference>
<dbReference type="PANTHER" id="PTHR46986">
    <property type="entry name" value="ENDORIBONUCLEASE YBEY, CHLOROPLASTIC"/>
    <property type="match status" value="1"/>
</dbReference>
<dbReference type="PANTHER" id="PTHR46986:SF1">
    <property type="entry name" value="ENDORIBONUCLEASE YBEY, CHLOROPLASTIC"/>
    <property type="match status" value="1"/>
</dbReference>
<dbReference type="Pfam" id="PF02130">
    <property type="entry name" value="YbeY"/>
    <property type="match status" value="1"/>
</dbReference>
<dbReference type="SUPFAM" id="SSF55486">
    <property type="entry name" value="Metalloproteases ('zincins'), catalytic domain"/>
    <property type="match status" value="1"/>
</dbReference>
<dbReference type="PROSITE" id="PS01306">
    <property type="entry name" value="UPF0054"/>
    <property type="match status" value="1"/>
</dbReference>
<comment type="function">
    <text evidence="1">Single strand-specific metallo-endoribonuclease involved in late-stage 70S ribosome quality control and in maturation of the 3' terminus of the 16S rRNA.</text>
</comment>
<comment type="cofactor">
    <cofactor evidence="1">
        <name>Zn(2+)</name>
        <dbReference type="ChEBI" id="CHEBI:29105"/>
    </cofactor>
    <text evidence="1">Binds 1 zinc ion.</text>
</comment>
<comment type="subcellular location">
    <subcellularLocation>
        <location evidence="1">Cytoplasm</location>
    </subcellularLocation>
</comment>
<comment type="similarity">
    <text evidence="1">Belongs to the endoribonuclease YbeY family.</text>
</comment>
<feature type="chain" id="PRO_0000102516" description="Endoribonuclease YbeY">
    <location>
        <begin position="1"/>
        <end position="194"/>
    </location>
</feature>
<feature type="region of interest" description="Disordered" evidence="2">
    <location>
        <begin position="162"/>
        <end position="194"/>
    </location>
</feature>
<feature type="compositionally biased region" description="Acidic residues" evidence="2">
    <location>
        <begin position="165"/>
        <end position="182"/>
    </location>
</feature>
<feature type="binding site" evidence="1">
    <location>
        <position position="127"/>
    </location>
    <ligand>
        <name>Zn(2+)</name>
        <dbReference type="ChEBI" id="CHEBI:29105"/>
        <note>catalytic</note>
    </ligand>
</feature>
<feature type="binding site" evidence="1">
    <location>
        <position position="131"/>
    </location>
    <ligand>
        <name>Zn(2+)</name>
        <dbReference type="ChEBI" id="CHEBI:29105"/>
        <note>catalytic</note>
    </ligand>
</feature>
<feature type="binding site" evidence="1">
    <location>
        <position position="137"/>
    </location>
    <ligand>
        <name>Zn(2+)</name>
        <dbReference type="ChEBI" id="CHEBI:29105"/>
        <note>catalytic</note>
    </ligand>
</feature>
<sequence>MMEQPSTNLTADVLIDEEAEPDLSIWFGCLETARTELAQAAIAAAAVEGCDRGSVGVRICDDATIHPINREFLQHDYPTDVISFPYELEPPMVEGELVASFETAIENASEPSNPLSPREELLLYVVHGTLHIVGHDDQSPEPRAAMRRAEIAAMKLIGIELPLSNDEDSAPEQDDSFDDDASDSSGGIMSGGVS</sequence>
<accession>Q7USC9</accession>
<protein>
    <recommendedName>
        <fullName evidence="1">Endoribonuclease YbeY</fullName>
        <ecNumber evidence="1">3.1.-.-</ecNumber>
    </recommendedName>
</protein>
<evidence type="ECO:0000255" key="1">
    <source>
        <dbReference type="HAMAP-Rule" id="MF_00009"/>
    </source>
</evidence>
<evidence type="ECO:0000256" key="2">
    <source>
        <dbReference type="SAM" id="MobiDB-lite"/>
    </source>
</evidence>
<gene>
    <name evidence="1" type="primary">ybeY</name>
    <name type="ordered locus">RB4579</name>
</gene>
<organism>
    <name type="scientific">Rhodopirellula baltica (strain DSM 10527 / NCIMB 13988 / SH1)</name>
    <dbReference type="NCBI Taxonomy" id="243090"/>
    <lineage>
        <taxon>Bacteria</taxon>
        <taxon>Pseudomonadati</taxon>
        <taxon>Planctomycetota</taxon>
        <taxon>Planctomycetia</taxon>
        <taxon>Pirellulales</taxon>
        <taxon>Pirellulaceae</taxon>
        <taxon>Rhodopirellula</taxon>
    </lineage>
</organism>
<proteinExistence type="inferred from homology"/>
<name>YBEY_RHOBA</name>
<reference key="1">
    <citation type="journal article" date="2003" name="Proc. Natl. Acad. Sci. U.S.A.">
        <title>Complete genome sequence of the marine planctomycete Pirellula sp. strain 1.</title>
        <authorList>
            <person name="Gloeckner F.O."/>
            <person name="Kube M."/>
            <person name="Bauer M."/>
            <person name="Teeling H."/>
            <person name="Lombardot T."/>
            <person name="Ludwig W."/>
            <person name="Gade D."/>
            <person name="Beck A."/>
            <person name="Borzym K."/>
            <person name="Heitmann K."/>
            <person name="Rabus R."/>
            <person name="Schlesner H."/>
            <person name="Amann R."/>
            <person name="Reinhardt R."/>
        </authorList>
    </citation>
    <scope>NUCLEOTIDE SEQUENCE [LARGE SCALE GENOMIC DNA]</scope>
    <source>
        <strain>DSM 10527 / NCIMB 13988 / SH1</strain>
    </source>
</reference>